<organism>
    <name type="scientific">Mus musculus</name>
    <name type="common">Mouse</name>
    <dbReference type="NCBI Taxonomy" id="10090"/>
    <lineage>
        <taxon>Eukaryota</taxon>
        <taxon>Metazoa</taxon>
        <taxon>Chordata</taxon>
        <taxon>Craniata</taxon>
        <taxon>Vertebrata</taxon>
        <taxon>Euteleostomi</taxon>
        <taxon>Mammalia</taxon>
        <taxon>Eutheria</taxon>
        <taxon>Euarchontoglires</taxon>
        <taxon>Glires</taxon>
        <taxon>Rodentia</taxon>
        <taxon>Myomorpha</taxon>
        <taxon>Muroidea</taxon>
        <taxon>Muridae</taxon>
        <taxon>Murinae</taxon>
        <taxon>Mus</taxon>
        <taxon>Mus</taxon>
    </lineage>
</organism>
<name>TF2H3_MOUSE</name>
<reference key="1">
    <citation type="journal article" date="2004" name="Genome Res.">
        <title>The status, quality, and expansion of the NIH full-length cDNA project: the Mammalian Gene Collection (MGC).</title>
        <authorList>
            <consortium name="The MGC Project Team"/>
        </authorList>
    </citation>
    <scope>NUCLEOTIDE SEQUENCE [LARGE SCALE MRNA]</scope>
    <source>
        <tissue>Retina</tissue>
    </source>
</reference>
<reference key="2">
    <citation type="journal article" date="1997" name="Cell">
        <title>Stimulation of RAR alpha activation function AF-1 through binding to the general transcription factor TFIIH and phosphorylation by CDK7.</title>
        <authorList>
            <person name="Rochette-Egly C."/>
            <person name="Adam S."/>
            <person name="Rossignol M."/>
            <person name="Egly J.-M."/>
            <person name="Chambon P."/>
        </authorList>
    </citation>
    <scope>INTERACTION WITH RARA</scope>
</reference>
<accession>Q8VD76</accession>
<proteinExistence type="evidence at protein level"/>
<feature type="chain" id="PRO_0000119252" description="General transcription factor IIH subunit 3">
    <location>
        <begin position="1"/>
        <end position="309"/>
    </location>
</feature>
<feature type="zinc finger region" description="C4-type">
    <location>
        <begin position="269"/>
        <end position="286"/>
    </location>
</feature>
<dbReference type="EMBL" id="BC017515">
    <property type="protein sequence ID" value="AAH17515.1"/>
    <property type="molecule type" value="mRNA"/>
</dbReference>
<dbReference type="CCDS" id="CCDS19680.1"/>
<dbReference type="RefSeq" id="NP_852075.1">
    <property type="nucleotide sequence ID" value="NM_181410.3"/>
</dbReference>
<dbReference type="SMR" id="Q8VD76"/>
<dbReference type="BioGRID" id="229071">
    <property type="interactions" value="3"/>
</dbReference>
<dbReference type="FunCoup" id="Q8VD76">
    <property type="interactions" value="3342"/>
</dbReference>
<dbReference type="IntAct" id="Q8VD76">
    <property type="interactions" value="1"/>
</dbReference>
<dbReference type="STRING" id="10090.ENSMUSP00000031333"/>
<dbReference type="GlyGen" id="Q8VD76">
    <property type="glycosylation" value="1 site, 1 O-linked glycan (1 site)"/>
</dbReference>
<dbReference type="iPTMnet" id="Q8VD76"/>
<dbReference type="PhosphoSitePlus" id="Q8VD76"/>
<dbReference type="PaxDb" id="10090-ENSMUSP00000031333"/>
<dbReference type="ProteomicsDB" id="259012"/>
<dbReference type="Pumba" id="Q8VD76"/>
<dbReference type="Antibodypedia" id="19294">
    <property type="antibodies" value="128 antibodies from 25 providers"/>
</dbReference>
<dbReference type="DNASU" id="209357"/>
<dbReference type="Ensembl" id="ENSMUST00000031333.4">
    <property type="protein sequence ID" value="ENSMUSP00000031333.4"/>
    <property type="gene ID" value="ENSMUSG00000029387.11"/>
</dbReference>
<dbReference type="GeneID" id="209357"/>
<dbReference type="KEGG" id="mmu:209357"/>
<dbReference type="UCSC" id="uc012edo.1">
    <property type="organism name" value="mouse"/>
</dbReference>
<dbReference type="AGR" id="MGI:1277143"/>
<dbReference type="CTD" id="2967"/>
<dbReference type="MGI" id="MGI:1277143">
    <property type="gene designation" value="Gtf2h3"/>
</dbReference>
<dbReference type="VEuPathDB" id="HostDB:ENSMUSG00000029387"/>
<dbReference type="eggNOG" id="KOG2487">
    <property type="taxonomic scope" value="Eukaryota"/>
</dbReference>
<dbReference type="GeneTree" id="ENSGT00390000013143"/>
<dbReference type="HOGENOM" id="CLU_040211_1_0_1"/>
<dbReference type="InParanoid" id="Q8VD76"/>
<dbReference type="OMA" id="QGCDITS"/>
<dbReference type="OrthoDB" id="17307at2759"/>
<dbReference type="PhylomeDB" id="Q8VD76"/>
<dbReference type="TreeFam" id="TF314336"/>
<dbReference type="Reactome" id="R-MMU-112382">
    <property type="pathway name" value="Formation of RNA Pol II elongation complex"/>
</dbReference>
<dbReference type="Reactome" id="R-MMU-113418">
    <property type="pathway name" value="Formation of the Early Elongation Complex"/>
</dbReference>
<dbReference type="Reactome" id="R-MMU-5696395">
    <property type="pathway name" value="Formation of Incision Complex in GG-NER"/>
</dbReference>
<dbReference type="Reactome" id="R-MMU-5696400">
    <property type="pathway name" value="Dual Incision in GG-NER"/>
</dbReference>
<dbReference type="Reactome" id="R-MMU-674695">
    <property type="pathway name" value="RNA Polymerase II Pre-transcription Events"/>
</dbReference>
<dbReference type="Reactome" id="R-MMU-6781823">
    <property type="pathway name" value="Formation of TC-NER Pre-Incision Complex"/>
</dbReference>
<dbReference type="Reactome" id="R-MMU-6782135">
    <property type="pathway name" value="Dual incision in TC-NER"/>
</dbReference>
<dbReference type="Reactome" id="R-MMU-6782210">
    <property type="pathway name" value="Gap-filling DNA repair synthesis and ligation in TC-NER"/>
</dbReference>
<dbReference type="Reactome" id="R-MMU-6796648">
    <property type="pathway name" value="TP53 Regulates Transcription of DNA Repair Genes"/>
</dbReference>
<dbReference type="Reactome" id="R-MMU-72086">
    <property type="pathway name" value="mRNA Capping"/>
</dbReference>
<dbReference type="Reactome" id="R-MMU-73762">
    <property type="pathway name" value="RNA Polymerase I Transcription Initiation"/>
</dbReference>
<dbReference type="Reactome" id="R-MMU-73772">
    <property type="pathway name" value="RNA Polymerase I Promoter Escape"/>
</dbReference>
<dbReference type="Reactome" id="R-MMU-73776">
    <property type="pathway name" value="RNA Polymerase II Promoter Escape"/>
</dbReference>
<dbReference type="Reactome" id="R-MMU-73779">
    <property type="pathway name" value="RNA Polymerase II Transcription Pre-Initiation And Promoter Opening"/>
</dbReference>
<dbReference type="Reactome" id="R-MMU-73863">
    <property type="pathway name" value="RNA Polymerase I Transcription Termination"/>
</dbReference>
<dbReference type="Reactome" id="R-MMU-75953">
    <property type="pathway name" value="RNA Polymerase II Transcription Initiation"/>
</dbReference>
<dbReference type="Reactome" id="R-MMU-75955">
    <property type="pathway name" value="RNA Polymerase II Transcription Elongation"/>
</dbReference>
<dbReference type="Reactome" id="R-MMU-76042">
    <property type="pathway name" value="RNA Polymerase II Transcription Initiation And Promoter Clearance"/>
</dbReference>
<dbReference type="Reactome" id="R-MMU-77075">
    <property type="pathway name" value="RNA Pol II CTD phosphorylation and interaction with CE"/>
</dbReference>
<dbReference type="BioGRID-ORCS" id="209357">
    <property type="hits" value="28 hits in 116 CRISPR screens"/>
</dbReference>
<dbReference type="PRO" id="PR:Q8VD76"/>
<dbReference type="Proteomes" id="UP000000589">
    <property type="component" value="Chromosome 5"/>
</dbReference>
<dbReference type="RNAct" id="Q8VD76">
    <property type="molecule type" value="protein"/>
</dbReference>
<dbReference type="Bgee" id="ENSMUSG00000029387">
    <property type="expression patterns" value="Expressed in epiblast (generic) and 203 other cell types or tissues"/>
</dbReference>
<dbReference type="ExpressionAtlas" id="Q8VD76">
    <property type="expression patterns" value="baseline and differential"/>
</dbReference>
<dbReference type="GO" id="GO:0000438">
    <property type="term" value="C:core TFIIH complex portion of holo TFIIH complex"/>
    <property type="evidence" value="ECO:0000250"/>
    <property type="project" value="UniProtKB"/>
</dbReference>
<dbReference type="GO" id="GO:0005634">
    <property type="term" value="C:nucleus"/>
    <property type="evidence" value="ECO:0000250"/>
    <property type="project" value="UniProtKB"/>
</dbReference>
<dbReference type="GO" id="GO:0005669">
    <property type="term" value="C:transcription factor TFIID complex"/>
    <property type="evidence" value="ECO:0007669"/>
    <property type="project" value="Ensembl"/>
</dbReference>
<dbReference type="GO" id="GO:0005675">
    <property type="term" value="C:transcription factor TFIIH holo complex"/>
    <property type="evidence" value="ECO:0000250"/>
    <property type="project" value="UniProtKB"/>
</dbReference>
<dbReference type="GO" id="GO:0097550">
    <property type="term" value="C:transcription preinitiation complex"/>
    <property type="evidence" value="ECO:0007669"/>
    <property type="project" value="Ensembl"/>
</dbReference>
<dbReference type="GO" id="GO:0016251">
    <property type="term" value="F:RNA polymerase II general transcription initiation factor activity"/>
    <property type="evidence" value="ECO:0007669"/>
    <property type="project" value="Ensembl"/>
</dbReference>
<dbReference type="GO" id="GO:0008270">
    <property type="term" value="F:zinc ion binding"/>
    <property type="evidence" value="ECO:0007669"/>
    <property type="project" value="UniProtKB-KW"/>
</dbReference>
<dbReference type="GO" id="GO:0006289">
    <property type="term" value="P:nucleotide-excision repair"/>
    <property type="evidence" value="ECO:0007669"/>
    <property type="project" value="InterPro"/>
</dbReference>
<dbReference type="GO" id="GO:0006355">
    <property type="term" value="P:regulation of DNA-templated transcription"/>
    <property type="evidence" value="ECO:0007669"/>
    <property type="project" value="InterPro"/>
</dbReference>
<dbReference type="GO" id="GO:0006366">
    <property type="term" value="P:transcription by RNA polymerase II"/>
    <property type="evidence" value="ECO:0000250"/>
    <property type="project" value="UniProtKB"/>
</dbReference>
<dbReference type="FunFam" id="3.40.50.410:FF:000045">
    <property type="entry name" value="general transcription factor IIH subunit 3 isoform X1"/>
    <property type="match status" value="1"/>
</dbReference>
<dbReference type="Gene3D" id="3.40.50.410">
    <property type="entry name" value="von Willebrand factor, type A domain"/>
    <property type="match status" value="1"/>
</dbReference>
<dbReference type="InterPro" id="IPR004600">
    <property type="entry name" value="TFIIH_Tfb4/GTF2H3"/>
</dbReference>
<dbReference type="InterPro" id="IPR036465">
    <property type="entry name" value="vWFA_dom_sf"/>
</dbReference>
<dbReference type="NCBIfam" id="TIGR00627">
    <property type="entry name" value="tfb4"/>
    <property type="match status" value="1"/>
</dbReference>
<dbReference type="PANTHER" id="PTHR12831:SF0">
    <property type="entry name" value="GENERAL TRANSCRIPTION FACTOR IIH SUBUNIT 3"/>
    <property type="match status" value="1"/>
</dbReference>
<dbReference type="PANTHER" id="PTHR12831">
    <property type="entry name" value="TRANSCRIPTION INITIATION FACTOR IIH TFIIH , POLYPEPTIDE 3-RELATED"/>
    <property type="match status" value="1"/>
</dbReference>
<dbReference type="Pfam" id="PF03850">
    <property type="entry name" value="Tfb4"/>
    <property type="match status" value="1"/>
</dbReference>
<keyword id="KW-0227">DNA damage</keyword>
<keyword id="KW-0234">DNA repair</keyword>
<keyword id="KW-0479">Metal-binding</keyword>
<keyword id="KW-0539">Nucleus</keyword>
<keyword id="KW-1185">Reference proteome</keyword>
<keyword id="KW-0804">Transcription</keyword>
<keyword id="KW-0805">Transcription regulation</keyword>
<keyword id="KW-0862">Zinc</keyword>
<keyword id="KW-0863">Zinc-finger</keyword>
<comment type="function">
    <text evidence="1">Component of the general transcription and DNA repair factor IIH (TFIIH) core complex, which is involved in general and transcription-coupled nucleotide excision repair (NER) of damaged DNA and, when complexed to CAK, in RNA transcription by RNA polymerase II. In NER, TFIIH acts by opening DNA around the lesion to allow the excision of the damaged oligonucleotide and its replacement by a new DNA fragment. In transcription, TFIIH has an essential role in transcription initiation. When the pre-initiation complex (PIC) has been established, TFIIH is required for promoter opening and promoter escape. Phosphorylation of the C-terminal tail (CTD) of the largest subunit of RNA polymerase II by the kinase module CAK controls the initiation of transcription.</text>
</comment>
<comment type="subunit">
    <text evidence="1 2">Part of a TFIID-containing RNA polymerase II pre-initiation complex that is composed of TBP and at least GTF2A1, GTF2A2, GTF2E1, GTF2E2, GTF2F1, GTF2H2, GTF2H3, GTF2H4, GTF2H5, GTF2B, TCEA1, ERCC2, ERCC3, TAF1, TAF2, TAF3, TAF4, TAF5, TAF6, TAF7, TAF8, TAF9, TAF10, TAF11, TAF12 and TAF13. Component of the 7-subunit TFIIH core complex composed of XPB/ERCC3, XPD/ERCC2, GTF2H1, GTF2H2, GTF2H3, GTF2H4 and GTF2H5, which is active in NER. The core complex associates with the 3-subunit CDK-activating kinase (CAK) module composed of CCNH/cyclin H, CDK7 and MNAT1 to form the 10-subunit holoenzyme (holo-TFIIH) active in transcription (By similarity). Interacts with RARA; the interaction requires prior phosphorylation of RARA on 'Ser-369' which then enhances interaction of RARA with CDK7 (PubMed:9230306).</text>
</comment>
<comment type="subcellular location">
    <subcellularLocation>
        <location evidence="1">Nucleus</location>
    </subcellularLocation>
</comment>
<comment type="similarity">
    <text evidence="3">Belongs to the TFB4 family.</text>
</comment>
<sequence length="309" mass="34244">MAADEDELNLLVIIVDTNPIWWGKQALKESQFTLSKCMDAVMVLANSHLFMNRSNQLAVIASHIQESRLLYPGKNGGLGDFFGDPGNALPDCNPSGSKDGKYELLTVANEVIAEEIKDLMTKSDIKGQHTETLLAGSLAKALCYIHRVNKAVKDNQEMKSRILVIKAAEDSALQYMNFMNVIFAAQKQNILIDACVLDSDSGLLQQACDITGGLYLKVPQMPSLLQYLLWVFLPDQDQRSQLILPPPIHVDYRAACFCHRSLIEIGYVCSVCLSIFCNFSPICTTCETAFKISLPPVLKAKKKKQKVSL</sequence>
<gene>
    <name type="primary">Gtf2h3</name>
</gene>
<evidence type="ECO:0000250" key="1">
    <source>
        <dbReference type="UniProtKB" id="Q13889"/>
    </source>
</evidence>
<evidence type="ECO:0000269" key="2">
    <source>
    </source>
</evidence>
<evidence type="ECO:0000305" key="3"/>
<protein>
    <recommendedName>
        <fullName>General transcription factor IIH subunit 3</fullName>
    </recommendedName>
    <alternativeName>
        <fullName>Basic transcription factor 2 34 kDa subunit</fullName>
        <shortName>BTF2 p34</shortName>
    </alternativeName>
    <alternativeName>
        <fullName>General transcription factor IIH polypeptide 3</fullName>
    </alternativeName>
    <alternativeName>
        <fullName>TFIIH basal transcription factor complex p34 subunit</fullName>
    </alternativeName>
</protein>